<accession>Q6D8E3</accession>
<comment type="similarity">
    <text evidence="1">Belongs to the universal ribosomal protein uS2 family.</text>
</comment>
<feature type="chain" id="PRO_0000134169" description="Small ribosomal subunit protein uS2">
    <location>
        <begin position="1"/>
        <end position="241"/>
    </location>
</feature>
<gene>
    <name evidence="1" type="primary">rpsB</name>
    <name type="ordered locus">ECA1031</name>
</gene>
<sequence>MATVSMRDMLKAGVHFGHQTRYWNPKMKPFIFGARNKVHIINLENTVPMFNDALAELGKIASRKGKILFVGTKRAASEAVKDSANNCDQFFVNHRWLGGMLTNWKTVRQSIKRLKDLEIQSQDGTFDKLTKKEALMRTRELDKLEKSLGGIKDMGGLPDALFVIDADHEHIAIKEANNLGIPVFAVVDTNSDPDGVDFIIPGNDDAIRAINLYLGAVATAVREGRSQDLAVQAEEGLVEAE</sequence>
<protein>
    <recommendedName>
        <fullName evidence="1">Small ribosomal subunit protein uS2</fullName>
    </recommendedName>
    <alternativeName>
        <fullName evidence="2">30S ribosomal protein S2</fullName>
    </alternativeName>
</protein>
<keyword id="KW-1185">Reference proteome</keyword>
<keyword id="KW-0687">Ribonucleoprotein</keyword>
<keyword id="KW-0689">Ribosomal protein</keyword>
<organism>
    <name type="scientific">Pectobacterium atrosepticum (strain SCRI 1043 / ATCC BAA-672)</name>
    <name type="common">Erwinia carotovora subsp. atroseptica</name>
    <dbReference type="NCBI Taxonomy" id="218491"/>
    <lineage>
        <taxon>Bacteria</taxon>
        <taxon>Pseudomonadati</taxon>
        <taxon>Pseudomonadota</taxon>
        <taxon>Gammaproteobacteria</taxon>
        <taxon>Enterobacterales</taxon>
        <taxon>Pectobacteriaceae</taxon>
        <taxon>Pectobacterium</taxon>
    </lineage>
</organism>
<name>RS2_PECAS</name>
<dbReference type="EMBL" id="BX950851">
    <property type="protein sequence ID" value="CAG73942.1"/>
    <property type="molecule type" value="Genomic_DNA"/>
</dbReference>
<dbReference type="RefSeq" id="WP_011092630.1">
    <property type="nucleotide sequence ID" value="NC_004547.2"/>
</dbReference>
<dbReference type="SMR" id="Q6D8E3"/>
<dbReference type="STRING" id="218491.ECA1031"/>
<dbReference type="GeneID" id="57207860"/>
<dbReference type="KEGG" id="eca:ECA1031"/>
<dbReference type="PATRIC" id="fig|218491.5.peg.1039"/>
<dbReference type="eggNOG" id="COG0052">
    <property type="taxonomic scope" value="Bacteria"/>
</dbReference>
<dbReference type="HOGENOM" id="CLU_040318_1_0_6"/>
<dbReference type="OrthoDB" id="9808036at2"/>
<dbReference type="Proteomes" id="UP000007966">
    <property type="component" value="Chromosome"/>
</dbReference>
<dbReference type="GO" id="GO:0022627">
    <property type="term" value="C:cytosolic small ribosomal subunit"/>
    <property type="evidence" value="ECO:0007669"/>
    <property type="project" value="TreeGrafter"/>
</dbReference>
<dbReference type="GO" id="GO:0003735">
    <property type="term" value="F:structural constituent of ribosome"/>
    <property type="evidence" value="ECO:0007669"/>
    <property type="project" value="InterPro"/>
</dbReference>
<dbReference type="GO" id="GO:0006412">
    <property type="term" value="P:translation"/>
    <property type="evidence" value="ECO:0007669"/>
    <property type="project" value="UniProtKB-UniRule"/>
</dbReference>
<dbReference type="CDD" id="cd01425">
    <property type="entry name" value="RPS2"/>
    <property type="match status" value="1"/>
</dbReference>
<dbReference type="FunFam" id="1.10.287.610:FF:000001">
    <property type="entry name" value="30S ribosomal protein S2"/>
    <property type="match status" value="1"/>
</dbReference>
<dbReference type="Gene3D" id="3.40.50.10490">
    <property type="entry name" value="Glucose-6-phosphate isomerase like protein, domain 1"/>
    <property type="match status" value="1"/>
</dbReference>
<dbReference type="Gene3D" id="1.10.287.610">
    <property type="entry name" value="Helix hairpin bin"/>
    <property type="match status" value="1"/>
</dbReference>
<dbReference type="HAMAP" id="MF_00291_B">
    <property type="entry name" value="Ribosomal_uS2_B"/>
    <property type="match status" value="1"/>
</dbReference>
<dbReference type="InterPro" id="IPR001865">
    <property type="entry name" value="Ribosomal_uS2"/>
</dbReference>
<dbReference type="InterPro" id="IPR005706">
    <property type="entry name" value="Ribosomal_uS2_bac/mit/plastid"/>
</dbReference>
<dbReference type="InterPro" id="IPR018130">
    <property type="entry name" value="Ribosomal_uS2_CS"/>
</dbReference>
<dbReference type="InterPro" id="IPR023591">
    <property type="entry name" value="Ribosomal_uS2_flav_dom_sf"/>
</dbReference>
<dbReference type="NCBIfam" id="TIGR01011">
    <property type="entry name" value="rpsB_bact"/>
    <property type="match status" value="1"/>
</dbReference>
<dbReference type="PANTHER" id="PTHR12534">
    <property type="entry name" value="30S RIBOSOMAL PROTEIN S2 PROKARYOTIC AND ORGANELLAR"/>
    <property type="match status" value="1"/>
</dbReference>
<dbReference type="PANTHER" id="PTHR12534:SF0">
    <property type="entry name" value="SMALL RIBOSOMAL SUBUNIT PROTEIN US2M"/>
    <property type="match status" value="1"/>
</dbReference>
<dbReference type="Pfam" id="PF00318">
    <property type="entry name" value="Ribosomal_S2"/>
    <property type="match status" value="1"/>
</dbReference>
<dbReference type="PRINTS" id="PR00395">
    <property type="entry name" value="RIBOSOMALS2"/>
</dbReference>
<dbReference type="SUPFAM" id="SSF52313">
    <property type="entry name" value="Ribosomal protein S2"/>
    <property type="match status" value="1"/>
</dbReference>
<dbReference type="PROSITE" id="PS00962">
    <property type="entry name" value="RIBOSOMAL_S2_1"/>
    <property type="match status" value="1"/>
</dbReference>
<dbReference type="PROSITE" id="PS00963">
    <property type="entry name" value="RIBOSOMAL_S2_2"/>
    <property type="match status" value="1"/>
</dbReference>
<evidence type="ECO:0000255" key="1">
    <source>
        <dbReference type="HAMAP-Rule" id="MF_00291"/>
    </source>
</evidence>
<evidence type="ECO:0000305" key="2"/>
<reference key="1">
    <citation type="journal article" date="2004" name="Proc. Natl. Acad. Sci. U.S.A.">
        <title>Genome sequence of the enterobacterial phytopathogen Erwinia carotovora subsp. atroseptica and characterization of virulence factors.</title>
        <authorList>
            <person name="Bell K.S."/>
            <person name="Sebaihia M."/>
            <person name="Pritchard L."/>
            <person name="Holden M.T.G."/>
            <person name="Hyman L.J."/>
            <person name="Holeva M.C."/>
            <person name="Thomson N.R."/>
            <person name="Bentley S.D."/>
            <person name="Churcher L.J.C."/>
            <person name="Mungall K."/>
            <person name="Atkin R."/>
            <person name="Bason N."/>
            <person name="Brooks K."/>
            <person name="Chillingworth T."/>
            <person name="Clark K."/>
            <person name="Doggett J."/>
            <person name="Fraser A."/>
            <person name="Hance Z."/>
            <person name="Hauser H."/>
            <person name="Jagels K."/>
            <person name="Moule S."/>
            <person name="Norbertczak H."/>
            <person name="Ormond D."/>
            <person name="Price C."/>
            <person name="Quail M.A."/>
            <person name="Sanders M."/>
            <person name="Walker D."/>
            <person name="Whitehead S."/>
            <person name="Salmond G.P.C."/>
            <person name="Birch P.R.J."/>
            <person name="Parkhill J."/>
            <person name="Toth I.K."/>
        </authorList>
    </citation>
    <scope>NUCLEOTIDE SEQUENCE [LARGE SCALE GENOMIC DNA]</scope>
    <source>
        <strain>SCRI 1043 / ATCC BAA-672</strain>
    </source>
</reference>
<proteinExistence type="inferred from homology"/>